<feature type="chain" id="PRO_1000072167" description="tRNA modification GTPase MnmE">
    <location>
        <begin position="1"/>
        <end position="448"/>
    </location>
</feature>
<feature type="domain" description="TrmE-type G">
    <location>
        <begin position="218"/>
        <end position="372"/>
    </location>
</feature>
<feature type="binding site" evidence="1">
    <location>
        <position position="25"/>
    </location>
    <ligand>
        <name>(6S)-5-formyl-5,6,7,8-tetrahydrofolate</name>
        <dbReference type="ChEBI" id="CHEBI:57457"/>
    </ligand>
</feature>
<feature type="binding site" evidence="1">
    <location>
        <position position="83"/>
    </location>
    <ligand>
        <name>(6S)-5-formyl-5,6,7,8-tetrahydrofolate</name>
        <dbReference type="ChEBI" id="CHEBI:57457"/>
    </ligand>
</feature>
<feature type="binding site" evidence="1">
    <location>
        <position position="122"/>
    </location>
    <ligand>
        <name>(6S)-5-formyl-5,6,7,8-tetrahydrofolate</name>
        <dbReference type="ChEBI" id="CHEBI:57457"/>
    </ligand>
</feature>
<feature type="binding site" evidence="1">
    <location>
        <begin position="228"/>
        <end position="233"/>
    </location>
    <ligand>
        <name>GTP</name>
        <dbReference type="ChEBI" id="CHEBI:37565"/>
    </ligand>
</feature>
<feature type="binding site" evidence="1">
    <location>
        <position position="228"/>
    </location>
    <ligand>
        <name>K(+)</name>
        <dbReference type="ChEBI" id="CHEBI:29103"/>
    </ligand>
</feature>
<feature type="binding site" evidence="1">
    <location>
        <position position="232"/>
    </location>
    <ligand>
        <name>Mg(2+)</name>
        <dbReference type="ChEBI" id="CHEBI:18420"/>
    </ligand>
</feature>
<feature type="binding site" evidence="1">
    <location>
        <begin position="247"/>
        <end position="253"/>
    </location>
    <ligand>
        <name>GTP</name>
        <dbReference type="ChEBI" id="CHEBI:37565"/>
    </ligand>
</feature>
<feature type="binding site" evidence="1">
    <location>
        <position position="247"/>
    </location>
    <ligand>
        <name>K(+)</name>
        <dbReference type="ChEBI" id="CHEBI:29103"/>
    </ligand>
</feature>
<feature type="binding site" evidence="1">
    <location>
        <position position="249"/>
    </location>
    <ligand>
        <name>K(+)</name>
        <dbReference type="ChEBI" id="CHEBI:29103"/>
    </ligand>
</feature>
<feature type="binding site" evidence="1">
    <location>
        <position position="252"/>
    </location>
    <ligand>
        <name>K(+)</name>
        <dbReference type="ChEBI" id="CHEBI:29103"/>
    </ligand>
</feature>
<feature type="binding site" evidence="1">
    <location>
        <position position="253"/>
    </location>
    <ligand>
        <name>Mg(2+)</name>
        <dbReference type="ChEBI" id="CHEBI:18420"/>
    </ligand>
</feature>
<feature type="binding site" evidence="1">
    <location>
        <begin position="272"/>
        <end position="275"/>
    </location>
    <ligand>
        <name>GTP</name>
        <dbReference type="ChEBI" id="CHEBI:37565"/>
    </ligand>
</feature>
<feature type="binding site" evidence="1">
    <location>
        <position position="448"/>
    </location>
    <ligand>
        <name>(6S)-5-formyl-5,6,7,8-tetrahydrofolate</name>
        <dbReference type="ChEBI" id="CHEBI:57457"/>
    </ligand>
</feature>
<dbReference type="EC" id="3.6.-.-" evidence="1"/>
<dbReference type="EMBL" id="AP009178">
    <property type="protein sequence ID" value="BAF69995.1"/>
    <property type="molecule type" value="Genomic_DNA"/>
</dbReference>
<dbReference type="RefSeq" id="WP_012082258.1">
    <property type="nucleotide sequence ID" value="NC_009662.1"/>
</dbReference>
<dbReference type="SMR" id="A6Q3D6"/>
<dbReference type="FunCoup" id="A6Q3D6">
    <property type="interactions" value="461"/>
</dbReference>
<dbReference type="STRING" id="387092.NIS_0883"/>
<dbReference type="KEGG" id="nis:NIS_0883"/>
<dbReference type="eggNOG" id="COG0486">
    <property type="taxonomic scope" value="Bacteria"/>
</dbReference>
<dbReference type="HOGENOM" id="CLU_019624_4_1_7"/>
<dbReference type="InParanoid" id="A6Q3D6"/>
<dbReference type="OrthoDB" id="9805918at2"/>
<dbReference type="Proteomes" id="UP000001118">
    <property type="component" value="Chromosome"/>
</dbReference>
<dbReference type="GO" id="GO:0005829">
    <property type="term" value="C:cytosol"/>
    <property type="evidence" value="ECO:0007669"/>
    <property type="project" value="TreeGrafter"/>
</dbReference>
<dbReference type="GO" id="GO:0005525">
    <property type="term" value="F:GTP binding"/>
    <property type="evidence" value="ECO:0007669"/>
    <property type="project" value="UniProtKB-UniRule"/>
</dbReference>
<dbReference type="GO" id="GO:0003924">
    <property type="term" value="F:GTPase activity"/>
    <property type="evidence" value="ECO:0007669"/>
    <property type="project" value="UniProtKB-UniRule"/>
</dbReference>
<dbReference type="GO" id="GO:0046872">
    <property type="term" value="F:metal ion binding"/>
    <property type="evidence" value="ECO:0007669"/>
    <property type="project" value="UniProtKB-KW"/>
</dbReference>
<dbReference type="GO" id="GO:0030488">
    <property type="term" value="P:tRNA methylation"/>
    <property type="evidence" value="ECO:0007669"/>
    <property type="project" value="TreeGrafter"/>
</dbReference>
<dbReference type="GO" id="GO:0002098">
    <property type="term" value="P:tRNA wobble uridine modification"/>
    <property type="evidence" value="ECO:0007669"/>
    <property type="project" value="TreeGrafter"/>
</dbReference>
<dbReference type="CDD" id="cd04164">
    <property type="entry name" value="trmE"/>
    <property type="match status" value="1"/>
</dbReference>
<dbReference type="CDD" id="cd14858">
    <property type="entry name" value="TrmE_N"/>
    <property type="match status" value="1"/>
</dbReference>
<dbReference type="FunFam" id="3.30.1360.120:FF:000003">
    <property type="entry name" value="tRNA modification GTPase MnmE"/>
    <property type="match status" value="1"/>
</dbReference>
<dbReference type="FunFam" id="3.40.50.300:FF:001376">
    <property type="entry name" value="tRNA modification GTPase MnmE"/>
    <property type="match status" value="1"/>
</dbReference>
<dbReference type="Gene3D" id="3.40.50.300">
    <property type="entry name" value="P-loop containing nucleotide triphosphate hydrolases"/>
    <property type="match status" value="1"/>
</dbReference>
<dbReference type="Gene3D" id="3.30.1360.120">
    <property type="entry name" value="Probable tRNA modification gtpase trme, domain 1"/>
    <property type="match status" value="1"/>
</dbReference>
<dbReference type="Gene3D" id="1.20.120.430">
    <property type="entry name" value="tRNA modification GTPase MnmE domain 2"/>
    <property type="match status" value="1"/>
</dbReference>
<dbReference type="HAMAP" id="MF_00379">
    <property type="entry name" value="GTPase_MnmE"/>
    <property type="match status" value="1"/>
</dbReference>
<dbReference type="InterPro" id="IPR031168">
    <property type="entry name" value="G_TrmE"/>
</dbReference>
<dbReference type="InterPro" id="IPR006073">
    <property type="entry name" value="GTP-bd"/>
</dbReference>
<dbReference type="InterPro" id="IPR018948">
    <property type="entry name" value="GTP-bd_TrmE_N"/>
</dbReference>
<dbReference type="InterPro" id="IPR004520">
    <property type="entry name" value="GTPase_MnmE"/>
</dbReference>
<dbReference type="InterPro" id="IPR027368">
    <property type="entry name" value="MnmE_dom2"/>
</dbReference>
<dbReference type="InterPro" id="IPR025867">
    <property type="entry name" value="MnmE_helical"/>
</dbReference>
<dbReference type="InterPro" id="IPR027417">
    <property type="entry name" value="P-loop_NTPase"/>
</dbReference>
<dbReference type="InterPro" id="IPR005225">
    <property type="entry name" value="Small_GTP-bd"/>
</dbReference>
<dbReference type="InterPro" id="IPR027266">
    <property type="entry name" value="TrmE/GcvT_dom1"/>
</dbReference>
<dbReference type="NCBIfam" id="TIGR00450">
    <property type="entry name" value="mnmE_trmE_thdF"/>
    <property type="match status" value="1"/>
</dbReference>
<dbReference type="NCBIfam" id="NF003661">
    <property type="entry name" value="PRK05291.1-3"/>
    <property type="match status" value="1"/>
</dbReference>
<dbReference type="NCBIfam" id="TIGR00231">
    <property type="entry name" value="small_GTP"/>
    <property type="match status" value="1"/>
</dbReference>
<dbReference type="PANTHER" id="PTHR42714">
    <property type="entry name" value="TRNA MODIFICATION GTPASE GTPBP3"/>
    <property type="match status" value="1"/>
</dbReference>
<dbReference type="PANTHER" id="PTHR42714:SF2">
    <property type="entry name" value="TRNA MODIFICATION GTPASE GTPBP3, MITOCHONDRIAL"/>
    <property type="match status" value="1"/>
</dbReference>
<dbReference type="Pfam" id="PF01926">
    <property type="entry name" value="MMR_HSR1"/>
    <property type="match status" value="1"/>
</dbReference>
<dbReference type="Pfam" id="PF12631">
    <property type="entry name" value="MnmE_helical"/>
    <property type="match status" value="1"/>
</dbReference>
<dbReference type="Pfam" id="PF10396">
    <property type="entry name" value="TrmE_N"/>
    <property type="match status" value="1"/>
</dbReference>
<dbReference type="SUPFAM" id="SSF52540">
    <property type="entry name" value="P-loop containing nucleoside triphosphate hydrolases"/>
    <property type="match status" value="1"/>
</dbReference>
<dbReference type="PROSITE" id="PS51709">
    <property type="entry name" value="G_TRME"/>
    <property type="match status" value="1"/>
</dbReference>
<accession>A6Q3D6</accession>
<comment type="function">
    <text evidence="1">Exhibits a very high intrinsic GTPase hydrolysis rate. Involved in the addition of a carboxymethylaminomethyl (cmnm) group at the wobble position (U34) of certain tRNAs, forming tRNA-cmnm(5)s(2)U34.</text>
</comment>
<comment type="cofactor">
    <cofactor evidence="1">
        <name>K(+)</name>
        <dbReference type="ChEBI" id="CHEBI:29103"/>
    </cofactor>
    <text evidence="1">Binds 1 potassium ion per subunit.</text>
</comment>
<comment type="subunit">
    <text evidence="1">Homodimer. Heterotetramer of two MnmE and two MnmG subunits.</text>
</comment>
<comment type="subcellular location">
    <subcellularLocation>
        <location evidence="1">Cytoplasm</location>
    </subcellularLocation>
</comment>
<comment type="similarity">
    <text evidence="1">Belongs to the TRAFAC class TrmE-Era-EngA-EngB-Septin-like GTPase superfamily. TrmE GTPase family.</text>
</comment>
<name>MNME_NITSB</name>
<keyword id="KW-0963">Cytoplasm</keyword>
<keyword id="KW-0342">GTP-binding</keyword>
<keyword id="KW-0378">Hydrolase</keyword>
<keyword id="KW-0460">Magnesium</keyword>
<keyword id="KW-0479">Metal-binding</keyword>
<keyword id="KW-0547">Nucleotide-binding</keyword>
<keyword id="KW-0630">Potassium</keyword>
<keyword id="KW-1185">Reference proteome</keyword>
<keyword id="KW-0819">tRNA processing</keyword>
<reference key="1">
    <citation type="journal article" date="2007" name="Proc. Natl. Acad. Sci. U.S.A.">
        <title>Deep-sea vent epsilon-proteobacterial genomes provide insights into emergence of pathogens.</title>
        <authorList>
            <person name="Nakagawa S."/>
            <person name="Takaki Y."/>
            <person name="Shimamura S."/>
            <person name="Reysenbach A.-L."/>
            <person name="Takai K."/>
            <person name="Horikoshi K."/>
        </authorList>
    </citation>
    <scope>NUCLEOTIDE SEQUENCE [LARGE SCALE GENOMIC DNA]</scope>
    <source>
        <strain>SB155-2</strain>
    </source>
</reference>
<sequence length="448" mass="49933">MNFENNSTIAAIATAYGVGSIAIVRISGPKSLSIAQKLSKKKDIQPRVAHLVTLYDDQSEPIDQAILIYFQAPKSFTGEDVVEFQCHGGVVVANMILQELLKAGARLANPGEFSKRAFFNGKIDLSEAEAIAKMIEAKSEDAAKILAKQIKGELKNYIENLREKLIRILAYVEVNIDYAEEDLPKDLQEQIEQQLNDIQEELQKIVASSKRRAGLIEGFKVAIIGKPNTGKSSLLNALLDYERAIVSDIAGTTRDTIEESVRIGTHLVRFVDTAGIREAHDTIEKIGIERSIQAIEESDIVIAMFDASKPLDAEDKKILELIESYKDQKEFIVVANKVDKGKHLDLSDFDALYMSVKKEITPLTQKLQKLLDSFANTEEIMLVTSRQIEAVTYALENINQARTPLQMGELEIFAFHINRVIESIGSITRPMQSSELLDKMFGEFCLGK</sequence>
<organism>
    <name type="scientific">Nitratiruptor sp. (strain SB155-2)</name>
    <dbReference type="NCBI Taxonomy" id="387092"/>
    <lineage>
        <taxon>Bacteria</taxon>
        <taxon>Pseudomonadati</taxon>
        <taxon>Campylobacterota</taxon>
        <taxon>Epsilonproteobacteria</taxon>
        <taxon>Nautiliales</taxon>
        <taxon>Nitratiruptoraceae</taxon>
        <taxon>Nitratiruptor</taxon>
    </lineage>
</organism>
<evidence type="ECO:0000255" key="1">
    <source>
        <dbReference type="HAMAP-Rule" id="MF_00379"/>
    </source>
</evidence>
<proteinExistence type="inferred from homology"/>
<gene>
    <name evidence="1" type="primary">mnmE</name>
    <name evidence="1" type="synonym">trmE</name>
    <name type="ordered locus">NIS_0883</name>
</gene>
<protein>
    <recommendedName>
        <fullName evidence="1">tRNA modification GTPase MnmE</fullName>
        <ecNumber evidence="1">3.6.-.-</ecNumber>
    </recommendedName>
</protein>